<comment type="catalytic activity">
    <reaction evidence="1">
        <text>D-erythro-1-(imidazol-4-yl)glycerol 3-phosphate = 3-(imidazol-4-yl)-2-oxopropyl phosphate + H2O</text>
        <dbReference type="Rhea" id="RHEA:11040"/>
        <dbReference type="ChEBI" id="CHEBI:15377"/>
        <dbReference type="ChEBI" id="CHEBI:57766"/>
        <dbReference type="ChEBI" id="CHEBI:58278"/>
        <dbReference type="EC" id="4.2.1.19"/>
    </reaction>
</comment>
<comment type="pathway">
    <text evidence="1">Amino-acid biosynthesis; L-histidine biosynthesis; L-histidine from 5-phospho-alpha-D-ribose 1-diphosphate: step 6/9.</text>
</comment>
<comment type="subcellular location">
    <subcellularLocation>
        <location evidence="1">Cytoplasm</location>
    </subcellularLocation>
</comment>
<comment type="similarity">
    <text evidence="1">Belongs to the imidazoleglycerol-phosphate dehydratase family.</text>
</comment>
<keyword id="KW-0028">Amino-acid biosynthesis</keyword>
<keyword id="KW-0963">Cytoplasm</keyword>
<keyword id="KW-0368">Histidine biosynthesis</keyword>
<keyword id="KW-0456">Lyase</keyword>
<keyword id="KW-1185">Reference proteome</keyword>
<name>HIS7_THISH</name>
<organism>
    <name type="scientific">Thioalkalivibrio sulfidiphilus (strain HL-EbGR7)</name>
    <dbReference type="NCBI Taxonomy" id="396588"/>
    <lineage>
        <taxon>Bacteria</taxon>
        <taxon>Pseudomonadati</taxon>
        <taxon>Pseudomonadota</taxon>
        <taxon>Gammaproteobacteria</taxon>
        <taxon>Chromatiales</taxon>
        <taxon>Ectothiorhodospiraceae</taxon>
        <taxon>Thioalkalivibrio</taxon>
    </lineage>
</organism>
<protein>
    <recommendedName>
        <fullName evidence="1">Imidazoleglycerol-phosphate dehydratase</fullName>
        <shortName evidence="1">IGPD</shortName>
        <ecNumber evidence="1">4.2.1.19</ecNumber>
    </recommendedName>
</protein>
<accession>B8GU29</accession>
<evidence type="ECO:0000255" key="1">
    <source>
        <dbReference type="HAMAP-Rule" id="MF_00076"/>
    </source>
</evidence>
<dbReference type="EC" id="4.2.1.19" evidence="1"/>
<dbReference type="EMBL" id="CP001339">
    <property type="protein sequence ID" value="ACL71312.1"/>
    <property type="molecule type" value="Genomic_DNA"/>
</dbReference>
<dbReference type="RefSeq" id="WP_012636801.1">
    <property type="nucleotide sequence ID" value="NC_011901.1"/>
</dbReference>
<dbReference type="SMR" id="B8GU29"/>
<dbReference type="STRING" id="396588.Tgr7_0213"/>
<dbReference type="KEGG" id="tgr:Tgr7_0213"/>
<dbReference type="eggNOG" id="COG0131">
    <property type="taxonomic scope" value="Bacteria"/>
</dbReference>
<dbReference type="HOGENOM" id="CLU_044308_3_0_6"/>
<dbReference type="OrthoDB" id="9790411at2"/>
<dbReference type="UniPathway" id="UPA00031">
    <property type="reaction ID" value="UER00011"/>
</dbReference>
<dbReference type="Proteomes" id="UP000002383">
    <property type="component" value="Chromosome"/>
</dbReference>
<dbReference type="GO" id="GO:0005737">
    <property type="term" value="C:cytoplasm"/>
    <property type="evidence" value="ECO:0007669"/>
    <property type="project" value="UniProtKB-SubCell"/>
</dbReference>
<dbReference type="GO" id="GO:0004424">
    <property type="term" value="F:imidazoleglycerol-phosphate dehydratase activity"/>
    <property type="evidence" value="ECO:0007669"/>
    <property type="project" value="UniProtKB-UniRule"/>
</dbReference>
<dbReference type="GO" id="GO:0000105">
    <property type="term" value="P:L-histidine biosynthetic process"/>
    <property type="evidence" value="ECO:0007669"/>
    <property type="project" value="UniProtKB-UniRule"/>
</dbReference>
<dbReference type="CDD" id="cd07914">
    <property type="entry name" value="IGPD"/>
    <property type="match status" value="1"/>
</dbReference>
<dbReference type="FunFam" id="3.30.230.40:FF:000002">
    <property type="entry name" value="Imidazoleglycerol-phosphate dehydratase"/>
    <property type="match status" value="1"/>
</dbReference>
<dbReference type="FunFam" id="3.30.230.40:FF:000003">
    <property type="entry name" value="Imidazoleglycerol-phosphate dehydratase HisB"/>
    <property type="match status" value="1"/>
</dbReference>
<dbReference type="Gene3D" id="3.30.230.40">
    <property type="entry name" value="Imidazole glycerol phosphate dehydratase, domain 1"/>
    <property type="match status" value="2"/>
</dbReference>
<dbReference type="HAMAP" id="MF_00076">
    <property type="entry name" value="HisB"/>
    <property type="match status" value="1"/>
</dbReference>
<dbReference type="InterPro" id="IPR038494">
    <property type="entry name" value="IGPD_sf"/>
</dbReference>
<dbReference type="InterPro" id="IPR000807">
    <property type="entry name" value="ImidazoleglycerolP_deHydtase"/>
</dbReference>
<dbReference type="InterPro" id="IPR020565">
    <property type="entry name" value="ImidazoleglycerP_deHydtase_CS"/>
</dbReference>
<dbReference type="InterPro" id="IPR020568">
    <property type="entry name" value="Ribosomal_Su5_D2-typ_SF"/>
</dbReference>
<dbReference type="NCBIfam" id="NF002106">
    <property type="entry name" value="PRK00951.1-1"/>
    <property type="match status" value="1"/>
</dbReference>
<dbReference type="NCBIfam" id="NF002109">
    <property type="entry name" value="PRK00951.1-5"/>
    <property type="match status" value="1"/>
</dbReference>
<dbReference type="NCBIfam" id="NF002111">
    <property type="entry name" value="PRK00951.2-1"/>
    <property type="match status" value="1"/>
</dbReference>
<dbReference type="NCBIfam" id="NF002114">
    <property type="entry name" value="PRK00951.2-4"/>
    <property type="match status" value="1"/>
</dbReference>
<dbReference type="PANTHER" id="PTHR23133:SF2">
    <property type="entry name" value="IMIDAZOLEGLYCEROL-PHOSPHATE DEHYDRATASE"/>
    <property type="match status" value="1"/>
</dbReference>
<dbReference type="PANTHER" id="PTHR23133">
    <property type="entry name" value="IMIDAZOLEGLYCEROL-PHOSPHATE DEHYDRATASE HIS7"/>
    <property type="match status" value="1"/>
</dbReference>
<dbReference type="Pfam" id="PF00475">
    <property type="entry name" value="IGPD"/>
    <property type="match status" value="1"/>
</dbReference>
<dbReference type="SUPFAM" id="SSF54211">
    <property type="entry name" value="Ribosomal protein S5 domain 2-like"/>
    <property type="match status" value="2"/>
</dbReference>
<dbReference type="PROSITE" id="PS00954">
    <property type="entry name" value="IGP_DEHYDRATASE_1"/>
    <property type="match status" value="1"/>
</dbReference>
<dbReference type="PROSITE" id="PS00955">
    <property type="entry name" value="IGP_DEHYDRATASE_2"/>
    <property type="match status" value="1"/>
</dbReference>
<sequence length="197" mass="21836">MSERIAEVSRDTLETQIRVRINLDGQGKGQFDTGLPFLDHMLDQVARHGVVDLEIVAKGDLHIDAHHTVEDIGITLGQAMARALGDKKGIRRYGHAYVPLDEALSRVVVDFSGRPGLEYHVDYPRARIGDFDVDLFGEFFQGFVNHAAVTLHIDNLRGRNAHHVAETIFKAFGRALRMAAEPDPRMQGTTPSTKGSL</sequence>
<gene>
    <name evidence="1" type="primary">hisB</name>
    <name type="ordered locus">Tgr7_0213</name>
</gene>
<proteinExistence type="inferred from homology"/>
<feature type="chain" id="PRO_1000190627" description="Imidazoleglycerol-phosphate dehydratase">
    <location>
        <begin position="1"/>
        <end position="197"/>
    </location>
</feature>
<reference key="1">
    <citation type="journal article" date="2011" name="Stand. Genomic Sci.">
        <title>Complete genome sequence of 'Thioalkalivibrio sulfidophilus' HL-EbGr7.</title>
        <authorList>
            <person name="Muyzer G."/>
            <person name="Sorokin D.Y."/>
            <person name="Mavromatis K."/>
            <person name="Lapidus A."/>
            <person name="Clum A."/>
            <person name="Ivanova N."/>
            <person name="Pati A."/>
            <person name="d'Haeseleer P."/>
            <person name="Woyke T."/>
            <person name="Kyrpides N.C."/>
        </authorList>
    </citation>
    <scope>NUCLEOTIDE SEQUENCE [LARGE SCALE GENOMIC DNA]</scope>
    <source>
        <strain>HL-EbGR7</strain>
    </source>
</reference>